<proteinExistence type="evidence at protein level"/>
<feature type="signal peptide" evidence="2">
    <location>
        <begin position="1"/>
        <end position="23"/>
    </location>
</feature>
<feature type="chain" id="PRO_0000392536" description="Protein shisa-9">
    <location>
        <begin position="24"/>
        <end position="424"/>
    </location>
</feature>
<feature type="topological domain" description="Extracellular" evidence="2">
    <location>
        <begin position="24"/>
        <end position="149"/>
    </location>
</feature>
<feature type="transmembrane region" description="Helical" evidence="2">
    <location>
        <begin position="150"/>
        <end position="170"/>
    </location>
</feature>
<feature type="topological domain" description="Cytoplasmic" evidence="2">
    <location>
        <begin position="171"/>
        <end position="424"/>
    </location>
</feature>
<feature type="region of interest" description="Disordered" evidence="3">
    <location>
        <begin position="333"/>
        <end position="424"/>
    </location>
</feature>
<feature type="compositionally biased region" description="Polar residues" evidence="3">
    <location>
        <begin position="414"/>
        <end position="424"/>
    </location>
</feature>
<feature type="glycosylation site" description="N-linked (GlcNAc...) asparagine" evidence="2">
    <location>
        <position position="45"/>
    </location>
</feature>
<feature type="glycosylation site" description="N-linked (GlcNAc...) asparagine" evidence="2">
    <location>
        <position position="89"/>
    </location>
</feature>
<feature type="glycosylation site" description="N-linked (GlcNAc...) asparagine" evidence="2">
    <location>
        <position position="116"/>
    </location>
</feature>
<feature type="splice variant" id="VSP_038817" description="In isoform 2." evidence="4">
    <location>
        <begin position="1"/>
        <end position="80"/>
    </location>
</feature>
<feature type="splice variant" id="VSP_038818" description="In isoform 3." evidence="5">
    <original>ALADVMRPQGHCNTDHMERDLNIVVHVQHYENM</original>
    <variation>LYDNLLFMEAQISFQEDEPAPGEWSVGLQTWTV</variation>
    <location>
        <begin position="189"/>
        <end position="221"/>
    </location>
</feature>
<feature type="splice variant" id="VSP_038819" description="In isoform 3." evidence="5">
    <location>
        <begin position="222"/>
        <end position="424"/>
    </location>
</feature>
<gene>
    <name type="primary">SHISA9</name>
</gene>
<evidence type="ECO:0000250" key="1"/>
<evidence type="ECO:0000255" key="2"/>
<evidence type="ECO:0000256" key="3">
    <source>
        <dbReference type="SAM" id="MobiDB-lite"/>
    </source>
</evidence>
<evidence type="ECO:0000303" key="4">
    <source>
    </source>
</evidence>
<evidence type="ECO:0000305" key="5"/>
<sequence length="424" mass="46925">MRRVLRLLLGCFLTELCARVCRAQERAGHGQLAQLGGVLLLAGGNRSGAASGEASEGAEASDAPPTRAPTPDFCRGYFDVMGQWDPPFNCSSGDFIFCCGTCGFRFCCTFKKRRLNQSTCTNYDTPLWLNTGKPPARKDDPLHDPTKDKTNLIVYIICGVVAVMVLVGIFTKLGLEKAHRPQREHMSRALADVMRPQGHCNTDHMERDLNIVVHVQHYENMDTRTPINNLHATQMNNAVPTSPLLQQMGHPHSYPNLGQISNPYEQQPPGKELNKYASLKAVGSSDGDWAVSTLKSPKADKVNDDFYTKRRHLAELAAKGNLPLHPVRVEDEPRAFSPEHGPAKQNGQKSRTNKMPPHPLAYTSTTNFKGWDPNEQSLRRQAYSNKGKLGTAETGSSDPLGTRPQHYPPPQPYFITNSKTEVTV</sequence>
<name>SHSA9_HUMAN</name>
<reference key="1">
    <citation type="journal article" date="2004" name="Nat. Genet.">
        <title>Complete sequencing and characterization of 21,243 full-length human cDNAs.</title>
        <authorList>
            <person name="Ota T."/>
            <person name="Suzuki Y."/>
            <person name="Nishikawa T."/>
            <person name="Otsuki T."/>
            <person name="Sugiyama T."/>
            <person name="Irie R."/>
            <person name="Wakamatsu A."/>
            <person name="Hayashi K."/>
            <person name="Sato H."/>
            <person name="Nagai K."/>
            <person name="Kimura K."/>
            <person name="Makita H."/>
            <person name="Sekine M."/>
            <person name="Obayashi M."/>
            <person name="Nishi T."/>
            <person name="Shibahara T."/>
            <person name="Tanaka T."/>
            <person name="Ishii S."/>
            <person name="Yamamoto J."/>
            <person name="Saito K."/>
            <person name="Kawai Y."/>
            <person name="Isono Y."/>
            <person name="Nakamura Y."/>
            <person name="Nagahari K."/>
            <person name="Murakami K."/>
            <person name="Yasuda T."/>
            <person name="Iwayanagi T."/>
            <person name="Wagatsuma M."/>
            <person name="Shiratori A."/>
            <person name="Sudo H."/>
            <person name="Hosoiri T."/>
            <person name="Kaku Y."/>
            <person name="Kodaira H."/>
            <person name="Kondo H."/>
            <person name="Sugawara M."/>
            <person name="Takahashi M."/>
            <person name="Kanda K."/>
            <person name="Yokoi T."/>
            <person name="Furuya T."/>
            <person name="Kikkawa E."/>
            <person name="Omura Y."/>
            <person name="Abe K."/>
            <person name="Kamihara K."/>
            <person name="Katsuta N."/>
            <person name="Sato K."/>
            <person name="Tanikawa M."/>
            <person name="Yamazaki M."/>
            <person name="Ninomiya K."/>
            <person name="Ishibashi T."/>
            <person name="Yamashita H."/>
            <person name="Murakawa K."/>
            <person name="Fujimori K."/>
            <person name="Tanai H."/>
            <person name="Kimata M."/>
            <person name="Watanabe M."/>
            <person name="Hiraoka S."/>
            <person name="Chiba Y."/>
            <person name="Ishida S."/>
            <person name="Ono Y."/>
            <person name="Takiguchi S."/>
            <person name="Watanabe S."/>
            <person name="Yosida M."/>
            <person name="Hotuta T."/>
            <person name="Kusano J."/>
            <person name="Kanehori K."/>
            <person name="Takahashi-Fujii A."/>
            <person name="Hara H."/>
            <person name="Tanase T.-O."/>
            <person name="Nomura Y."/>
            <person name="Togiya S."/>
            <person name="Komai F."/>
            <person name="Hara R."/>
            <person name="Takeuchi K."/>
            <person name="Arita M."/>
            <person name="Imose N."/>
            <person name="Musashino K."/>
            <person name="Yuuki H."/>
            <person name="Oshima A."/>
            <person name="Sasaki N."/>
            <person name="Aotsuka S."/>
            <person name="Yoshikawa Y."/>
            <person name="Matsunawa H."/>
            <person name="Ichihara T."/>
            <person name="Shiohata N."/>
            <person name="Sano S."/>
            <person name="Moriya S."/>
            <person name="Momiyama H."/>
            <person name="Satoh N."/>
            <person name="Takami S."/>
            <person name="Terashima Y."/>
            <person name="Suzuki O."/>
            <person name="Nakagawa S."/>
            <person name="Senoh A."/>
            <person name="Mizoguchi H."/>
            <person name="Goto Y."/>
            <person name="Shimizu F."/>
            <person name="Wakebe H."/>
            <person name="Hishigaki H."/>
            <person name="Watanabe T."/>
            <person name="Sugiyama A."/>
            <person name="Takemoto M."/>
            <person name="Kawakami B."/>
            <person name="Yamazaki M."/>
            <person name="Watanabe K."/>
            <person name="Kumagai A."/>
            <person name="Itakura S."/>
            <person name="Fukuzumi Y."/>
            <person name="Fujimori Y."/>
            <person name="Komiyama M."/>
            <person name="Tashiro H."/>
            <person name="Tanigami A."/>
            <person name="Fujiwara T."/>
            <person name="Ono T."/>
            <person name="Yamada K."/>
            <person name="Fujii Y."/>
            <person name="Ozaki K."/>
            <person name="Hirao M."/>
            <person name="Ohmori Y."/>
            <person name="Kawabata A."/>
            <person name="Hikiji T."/>
            <person name="Kobatake N."/>
            <person name="Inagaki H."/>
            <person name="Ikema Y."/>
            <person name="Okamoto S."/>
            <person name="Okitani R."/>
            <person name="Kawakami T."/>
            <person name="Noguchi S."/>
            <person name="Itoh T."/>
            <person name="Shigeta K."/>
            <person name="Senba T."/>
            <person name="Matsumura K."/>
            <person name="Nakajima Y."/>
            <person name="Mizuno T."/>
            <person name="Morinaga M."/>
            <person name="Sasaki M."/>
            <person name="Togashi T."/>
            <person name="Oyama M."/>
            <person name="Hata H."/>
            <person name="Watanabe M."/>
            <person name="Komatsu T."/>
            <person name="Mizushima-Sugano J."/>
            <person name="Satoh T."/>
            <person name="Shirai Y."/>
            <person name="Takahashi Y."/>
            <person name="Nakagawa K."/>
            <person name="Okumura K."/>
            <person name="Nagase T."/>
            <person name="Nomura N."/>
            <person name="Kikuchi H."/>
            <person name="Masuho Y."/>
            <person name="Yamashita R."/>
            <person name="Nakai K."/>
            <person name="Yada T."/>
            <person name="Nakamura Y."/>
            <person name="Ohara O."/>
            <person name="Isogai T."/>
            <person name="Sugano S."/>
        </authorList>
    </citation>
    <scope>NUCLEOTIDE SEQUENCE [LARGE SCALE MRNA] (ISOFORM 2)</scope>
    <source>
        <tissue>Brain</tissue>
    </source>
</reference>
<reference key="2">
    <citation type="journal article" date="2004" name="Nature">
        <title>The sequence and analysis of duplication-rich human chromosome 16.</title>
        <authorList>
            <person name="Martin J."/>
            <person name="Han C."/>
            <person name="Gordon L.A."/>
            <person name="Terry A."/>
            <person name="Prabhakar S."/>
            <person name="She X."/>
            <person name="Xie G."/>
            <person name="Hellsten U."/>
            <person name="Chan Y.M."/>
            <person name="Altherr M."/>
            <person name="Couronne O."/>
            <person name="Aerts A."/>
            <person name="Bajorek E."/>
            <person name="Black S."/>
            <person name="Blumer H."/>
            <person name="Branscomb E."/>
            <person name="Brown N.C."/>
            <person name="Bruno W.J."/>
            <person name="Buckingham J.M."/>
            <person name="Callen D.F."/>
            <person name="Campbell C.S."/>
            <person name="Campbell M.L."/>
            <person name="Campbell E.W."/>
            <person name="Caoile C."/>
            <person name="Challacombe J.F."/>
            <person name="Chasteen L.A."/>
            <person name="Chertkov O."/>
            <person name="Chi H.C."/>
            <person name="Christensen M."/>
            <person name="Clark L.M."/>
            <person name="Cohn J.D."/>
            <person name="Denys M."/>
            <person name="Detter J.C."/>
            <person name="Dickson M."/>
            <person name="Dimitrijevic-Bussod M."/>
            <person name="Escobar J."/>
            <person name="Fawcett J.J."/>
            <person name="Flowers D."/>
            <person name="Fotopulos D."/>
            <person name="Glavina T."/>
            <person name="Gomez M."/>
            <person name="Gonzales E."/>
            <person name="Goodstein D."/>
            <person name="Goodwin L.A."/>
            <person name="Grady D.L."/>
            <person name="Grigoriev I."/>
            <person name="Groza M."/>
            <person name="Hammon N."/>
            <person name="Hawkins T."/>
            <person name="Haydu L."/>
            <person name="Hildebrand C.E."/>
            <person name="Huang W."/>
            <person name="Israni S."/>
            <person name="Jett J."/>
            <person name="Jewett P.B."/>
            <person name="Kadner K."/>
            <person name="Kimball H."/>
            <person name="Kobayashi A."/>
            <person name="Krawczyk M.-C."/>
            <person name="Leyba T."/>
            <person name="Longmire J.L."/>
            <person name="Lopez F."/>
            <person name="Lou Y."/>
            <person name="Lowry S."/>
            <person name="Ludeman T."/>
            <person name="Manohar C.F."/>
            <person name="Mark G.A."/>
            <person name="McMurray K.L."/>
            <person name="Meincke L.J."/>
            <person name="Morgan J."/>
            <person name="Moyzis R.K."/>
            <person name="Mundt M.O."/>
            <person name="Munk A.C."/>
            <person name="Nandkeshwar R.D."/>
            <person name="Pitluck S."/>
            <person name="Pollard M."/>
            <person name="Predki P."/>
            <person name="Parson-Quintana B."/>
            <person name="Ramirez L."/>
            <person name="Rash S."/>
            <person name="Retterer J."/>
            <person name="Ricke D.O."/>
            <person name="Robinson D.L."/>
            <person name="Rodriguez A."/>
            <person name="Salamov A."/>
            <person name="Saunders E.H."/>
            <person name="Scott D."/>
            <person name="Shough T."/>
            <person name="Stallings R.L."/>
            <person name="Stalvey M."/>
            <person name="Sutherland R.D."/>
            <person name="Tapia R."/>
            <person name="Tesmer J.G."/>
            <person name="Thayer N."/>
            <person name="Thompson L.S."/>
            <person name="Tice H."/>
            <person name="Torney D.C."/>
            <person name="Tran-Gyamfi M."/>
            <person name="Tsai M."/>
            <person name="Ulanovsky L.E."/>
            <person name="Ustaszewska A."/>
            <person name="Vo N."/>
            <person name="White P.S."/>
            <person name="Williams A.L."/>
            <person name="Wills P.L."/>
            <person name="Wu J.-R."/>
            <person name="Wu K."/>
            <person name="Yang J."/>
            <person name="DeJong P."/>
            <person name="Bruce D."/>
            <person name="Doggett N.A."/>
            <person name="Deaven L."/>
            <person name="Schmutz J."/>
            <person name="Grimwood J."/>
            <person name="Richardson P."/>
            <person name="Rokhsar D.S."/>
            <person name="Eichler E.E."/>
            <person name="Gilna P."/>
            <person name="Lucas S.M."/>
            <person name="Myers R.M."/>
            <person name="Rubin E.M."/>
            <person name="Pennacchio L.A."/>
        </authorList>
    </citation>
    <scope>NUCLEOTIDE SEQUENCE [LARGE SCALE GENOMIC DNA]</scope>
</reference>
<protein>
    <recommendedName>
        <fullName>Protein shisa-9</fullName>
    </recommendedName>
</protein>
<comment type="function">
    <text evidence="1">Regulator of short-term neuronal synaptic plasticity in the dentate gyrus. Associates with AMPA receptors (ionotropic glutamate receptors) in synaptic spines and promotes AMPA receptor desensitization at excitatory synapses (By similarity).</text>
</comment>
<comment type="subunit">
    <text evidence="1">Component of some AMPA receptors (ionotropic glutamate receptors) complex, at least composed of some AMPA receptor (GRIA1, GRIA2 and/or GRIA3), CACNG2 and SHISA9, as well as low level of DLG4.</text>
</comment>
<comment type="subcellular location">
    <subcellularLocation>
        <location evidence="1">Cell projection</location>
        <location evidence="1">Dendritic spine membrane</location>
        <topology evidence="1">Single-pass type I membrane protein</topology>
    </subcellularLocation>
    <subcellularLocation>
        <location evidence="1">Synapse</location>
    </subcellularLocation>
</comment>
<comment type="alternative products">
    <event type="alternative splicing"/>
    <isoform>
        <id>B4DS77-1</id>
        <name>1</name>
        <sequence type="displayed"/>
    </isoform>
    <isoform>
        <id>B4DS77-2</id>
        <name>2</name>
        <sequence type="described" ref="VSP_038817"/>
    </isoform>
    <isoform>
        <id>B4DS77-3</id>
        <name>3</name>
        <sequence type="described" ref="VSP_038818 VSP_038819"/>
    </isoform>
</comment>
<comment type="similarity">
    <text evidence="5">Belongs to the shisa family. SHISA9 subfamily.</text>
</comment>
<keyword id="KW-0025">Alternative splicing</keyword>
<keyword id="KW-1003">Cell membrane</keyword>
<keyword id="KW-0966">Cell projection</keyword>
<keyword id="KW-0325">Glycoprotein</keyword>
<keyword id="KW-0472">Membrane</keyword>
<keyword id="KW-0628">Postsynaptic cell membrane</keyword>
<keyword id="KW-1267">Proteomics identification</keyword>
<keyword id="KW-1185">Reference proteome</keyword>
<keyword id="KW-0732">Signal</keyword>
<keyword id="KW-0770">Synapse</keyword>
<keyword id="KW-0812">Transmembrane</keyword>
<keyword id="KW-1133">Transmembrane helix</keyword>
<accession>B4DS77</accession>
<accession>C9J314</accession>
<accession>C9JCE9</accession>
<dbReference type="EMBL" id="AK299610">
    <property type="protein sequence ID" value="BAG61539.1"/>
    <property type="molecule type" value="mRNA"/>
</dbReference>
<dbReference type="EMBL" id="AC009134">
    <property type="status" value="NOT_ANNOTATED_CDS"/>
    <property type="molecule type" value="Genomic_DNA"/>
</dbReference>
<dbReference type="EMBL" id="AC092324">
    <property type="status" value="NOT_ANNOTATED_CDS"/>
    <property type="molecule type" value="Genomic_DNA"/>
</dbReference>
<dbReference type="EMBL" id="AC092380">
    <property type="status" value="NOT_ANNOTATED_CDS"/>
    <property type="molecule type" value="Genomic_DNA"/>
</dbReference>
<dbReference type="CCDS" id="CCDS45417.2">
    <molecule id="B4DS77-1"/>
</dbReference>
<dbReference type="CCDS" id="CCDS45418.2">
    <molecule id="B4DS77-3"/>
</dbReference>
<dbReference type="RefSeq" id="NP_001138676.2">
    <molecule id="B4DS77-1"/>
    <property type="nucleotide sequence ID" value="NM_001145204.3"/>
</dbReference>
<dbReference type="RefSeq" id="NP_001138677.2">
    <molecule id="B4DS77-3"/>
    <property type="nucleotide sequence ID" value="NM_001145205.2"/>
</dbReference>
<dbReference type="SMR" id="B4DS77"/>
<dbReference type="BioGRID" id="610383">
    <property type="interactions" value="3"/>
</dbReference>
<dbReference type="FunCoup" id="B4DS77">
    <property type="interactions" value="35"/>
</dbReference>
<dbReference type="IntAct" id="B4DS77">
    <property type="interactions" value="1"/>
</dbReference>
<dbReference type="STRING" id="9606.ENSP00000454014"/>
<dbReference type="TCDB" id="8.A.83.1.3">
    <property type="family name" value="the shisa6 regulator of short-term neuronal synaptic plasticity (shisa) family"/>
</dbReference>
<dbReference type="GlyCosmos" id="B4DS77">
    <property type="glycosylation" value="4 sites, 2 glycans"/>
</dbReference>
<dbReference type="GlyGen" id="B4DS77">
    <property type="glycosylation" value="4 sites, 2 O-linked glycans (1 site)"/>
</dbReference>
<dbReference type="iPTMnet" id="B4DS77"/>
<dbReference type="PhosphoSitePlus" id="B4DS77"/>
<dbReference type="BioMuta" id="SHISA9"/>
<dbReference type="jPOST" id="B4DS77"/>
<dbReference type="MassIVE" id="B4DS77"/>
<dbReference type="PaxDb" id="9606-ENSP00000454014"/>
<dbReference type="PeptideAtlas" id="B4DS77"/>
<dbReference type="ProteomicsDB" id="5005">
    <molecule id="B4DS77-1"/>
</dbReference>
<dbReference type="ProteomicsDB" id="5006">
    <molecule id="B4DS77-2"/>
</dbReference>
<dbReference type="Antibodypedia" id="56266">
    <property type="antibodies" value="93 antibodies from 24 providers"/>
</dbReference>
<dbReference type="DNASU" id="729993"/>
<dbReference type="Ensembl" id="ENST00000423335.2">
    <molecule id="B4DS77-3"/>
    <property type="protein sequence ID" value="ENSP00000395245.2"/>
    <property type="gene ID" value="ENSG00000237515.10"/>
</dbReference>
<dbReference type="Ensembl" id="ENST00000558583.3">
    <molecule id="B4DS77-1"/>
    <property type="protein sequence ID" value="ENSP00000454014.2"/>
    <property type="gene ID" value="ENSG00000237515.10"/>
</dbReference>
<dbReference type="GeneID" id="729993"/>
<dbReference type="KEGG" id="hsa:729993"/>
<dbReference type="MANE-Select" id="ENST00000558583.3">
    <property type="protein sequence ID" value="ENSP00000454014.2"/>
    <property type="RefSeq nucleotide sequence ID" value="NM_001145204.3"/>
    <property type="RefSeq protein sequence ID" value="NP_001138676.2"/>
</dbReference>
<dbReference type="UCSC" id="uc002dcd.3">
    <molecule id="B4DS77-1"/>
    <property type="organism name" value="human"/>
</dbReference>
<dbReference type="AGR" id="HGNC:37231"/>
<dbReference type="CTD" id="729993"/>
<dbReference type="DisGeNET" id="729993"/>
<dbReference type="GeneCards" id="SHISA9"/>
<dbReference type="HGNC" id="HGNC:37231">
    <property type="gene designation" value="SHISA9"/>
</dbReference>
<dbReference type="HPA" id="ENSG00000237515">
    <property type="expression patterns" value="Tissue enhanced (brain)"/>
</dbReference>
<dbReference type="MIM" id="613346">
    <property type="type" value="gene"/>
</dbReference>
<dbReference type="neXtProt" id="NX_B4DS77"/>
<dbReference type="OpenTargets" id="ENSG00000237515"/>
<dbReference type="PharmGKB" id="PA165450677"/>
<dbReference type="VEuPathDB" id="HostDB:ENSG00000237515"/>
<dbReference type="eggNOG" id="ENOG502QT2A">
    <property type="taxonomic scope" value="Eukaryota"/>
</dbReference>
<dbReference type="GeneTree" id="ENSGT00940000161478"/>
<dbReference type="HOGENOM" id="CLU_045403_0_0_1"/>
<dbReference type="InParanoid" id="B4DS77"/>
<dbReference type="OMA" id="QVIEMTT"/>
<dbReference type="OrthoDB" id="9935471at2759"/>
<dbReference type="PAN-GO" id="B4DS77">
    <property type="GO annotations" value="6 GO annotations based on evolutionary models"/>
</dbReference>
<dbReference type="PhylomeDB" id="B4DS77"/>
<dbReference type="PathwayCommons" id="B4DS77"/>
<dbReference type="SignaLink" id="B4DS77"/>
<dbReference type="BioGRID-ORCS" id="729993">
    <property type="hits" value="14 hits in 1156 CRISPR screens"/>
</dbReference>
<dbReference type="ChiTaRS" id="SHISA9">
    <property type="organism name" value="human"/>
</dbReference>
<dbReference type="GenomeRNAi" id="729993"/>
<dbReference type="Pharos" id="B4DS77">
    <property type="development level" value="Tbio"/>
</dbReference>
<dbReference type="PRO" id="PR:B4DS77"/>
<dbReference type="Proteomes" id="UP000005640">
    <property type="component" value="Chromosome 16"/>
</dbReference>
<dbReference type="RNAct" id="B4DS77">
    <property type="molecule type" value="protein"/>
</dbReference>
<dbReference type="Bgee" id="ENSG00000237515">
    <property type="expression patterns" value="Expressed in cortical plate and 124 other cell types or tissues"/>
</dbReference>
<dbReference type="ExpressionAtlas" id="B4DS77">
    <property type="expression patterns" value="baseline and differential"/>
</dbReference>
<dbReference type="GO" id="GO:0032281">
    <property type="term" value="C:AMPA glutamate receptor complex"/>
    <property type="evidence" value="ECO:0000318"/>
    <property type="project" value="GO_Central"/>
</dbReference>
<dbReference type="GO" id="GO:0032591">
    <property type="term" value="C:dendritic spine membrane"/>
    <property type="evidence" value="ECO:0000250"/>
    <property type="project" value="UniProtKB"/>
</dbReference>
<dbReference type="GO" id="GO:0098978">
    <property type="term" value="C:glutamatergic synapse"/>
    <property type="evidence" value="ECO:0007669"/>
    <property type="project" value="Ensembl"/>
</dbReference>
<dbReference type="GO" id="GO:0008328">
    <property type="term" value="C:ionotropic glutamate receptor complex"/>
    <property type="evidence" value="ECO:0000250"/>
    <property type="project" value="UniProtKB"/>
</dbReference>
<dbReference type="GO" id="GO:0014069">
    <property type="term" value="C:postsynaptic density"/>
    <property type="evidence" value="ECO:0000318"/>
    <property type="project" value="GO_Central"/>
</dbReference>
<dbReference type="GO" id="GO:0098839">
    <property type="term" value="C:postsynaptic density membrane"/>
    <property type="evidence" value="ECO:0007669"/>
    <property type="project" value="Ensembl"/>
</dbReference>
<dbReference type="GO" id="GO:0045211">
    <property type="term" value="C:postsynaptic membrane"/>
    <property type="evidence" value="ECO:0000318"/>
    <property type="project" value="GO_Central"/>
</dbReference>
<dbReference type="GO" id="GO:0045202">
    <property type="term" value="C:synapse"/>
    <property type="evidence" value="ECO:0000250"/>
    <property type="project" value="UniProtKB"/>
</dbReference>
<dbReference type="GO" id="GO:0030165">
    <property type="term" value="F:PDZ domain binding"/>
    <property type="evidence" value="ECO:0007669"/>
    <property type="project" value="Ensembl"/>
</dbReference>
<dbReference type="GO" id="GO:0048172">
    <property type="term" value="P:regulation of short-term neuronal synaptic plasticity"/>
    <property type="evidence" value="ECO:0000250"/>
    <property type="project" value="UniProtKB"/>
</dbReference>
<dbReference type="InterPro" id="IPR026910">
    <property type="entry name" value="Shisa"/>
</dbReference>
<dbReference type="InterPro" id="IPR053891">
    <property type="entry name" value="Shisa_N"/>
</dbReference>
<dbReference type="PANTHER" id="PTHR31774:SF1">
    <property type="entry name" value="PROTEIN SHISA-9"/>
    <property type="match status" value="1"/>
</dbReference>
<dbReference type="PANTHER" id="PTHR31774">
    <property type="entry name" value="PROTEIN SHISA-9-RELATED"/>
    <property type="match status" value="1"/>
</dbReference>
<dbReference type="Pfam" id="PF13908">
    <property type="entry name" value="Shisa_N"/>
    <property type="match status" value="1"/>
</dbReference>
<organism>
    <name type="scientific">Homo sapiens</name>
    <name type="common">Human</name>
    <dbReference type="NCBI Taxonomy" id="9606"/>
    <lineage>
        <taxon>Eukaryota</taxon>
        <taxon>Metazoa</taxon>
        <taxon>Chordata</taxon>
        <taxon>Craniata</taxon>
        <taxon>Vertebrata</taxon>
        <taxon>Euteleostomi</taxon>
        <taxon>Mammalia</taxon>
        <taxon>Eutheria</taxon>
        <taxon>Euarchontoglires</taxon>
        <taxon>Primates</taxon>
        <taxon>Haplorrhini</taxon>
        <taxon>Catarrhini</taxon>
        <taxon>Hominidae</taxon>
        <taxon>Homo</taxon>
    </lineage>
</organism>